<evidence type="ECO:0000255" key="1">
    <source>
        <dbReference type="HAMAP-Rule" id="MF_00454"/>
    </source>
</evidence>
<sequence>MITILLVMLGGGIGAVLRALITNICQRLFNSKIPIATSIVNITGSLIIGFMMGHALDSHHMFPFFVTGVLGGLTTFSTLSSELVNMLSPQFKPIRFVVYSLLQFILGFIACFYGYRI</sequence>
<reference key="1">
    <citation type="journal article" date="2003" name="Mol. Microbiol.">
        <title>Genome-based analysis of virulence genes in a non-biofilm-forming Staphylococcus epidermidis strain (ATCC 12228).</title>
        <authorList>
            <person name="Zhang Y.-Q."/>
            <person name="Ren S.-X."/>
            <person name="Li H.-L."/>
            <person name="Wang Y.-X."/>
            <person name="Fu G."/>
            <person name="Yang J."/>
            <person name="Qin Z.-Q."/>
            <person name="Miao Y.-G."/>
            <person name="Wang W.-Y."/>
            <person name="Chen R.-S."/>
            <person name="Shen Y."/>
            <person name="Chen Z."/>
            <person name="Yuan Z.-H."/>
            <person name="Zhao G.-P."/>
            <person name="Qu D."/>
            <person name="Danchin A."/>
            <person name="Wen Y.-M."/>
        </authorList>
    </citation>
    <scope>NUCLEOTIDE SEQUENCE [LARGE SCALE GENOMIC DNA]</scope>
    <source>
        <strain>ATCC 12228 / FDA PCI 1200</strain>
    </source>
</reference>
<organism>
    <name type="scientific">Staphylococcus epidermidis (strain ATCC 12228 / FDA PCI 1200)</name>
    <dbReference type="NCBI Taxonomy" id="176280"/>
    <lineage>
        <taxon>Bacteria</taxon>
        <taxon>Bacillati</taxon>
        <taxon>Bacillota</taxon>
        <taxon>Bacilli</taxon>
        <taxon>Bacillales</taxon>
        <taxon>Staphylococcaceae</taxon>
        <taxon>Staphylococcus</taxon>
    </lineage>
</organism>
<keyword id="KW-1003">Cell membrane</keyword>
<keyword id="KW-0407">Ion channel</keyword>
<keyword id="KW-0406">Ion transport</keyword>
<keyword id="KW-0472">Membrane</keyword>
<keyword id="KW-0479">Metal-binding</keyword>
<keyword id="KW-0915">Sodium</keyword>
<keyword id="KW-0812">Transmembrane</keyword>
<keyword id="KW-1133">Transmembrane helix</keyword>
<keyword id="KW-0813">Transport</keyword>
<feature type="chain" id="PRO_0000110186" description="Fluoride-specific ion channel FluC 2">
    <location>
        <begin position="1"/>
        <end position="117"/>
    </location>
</feature>
<feature type="transmembrane region" description="Helical" evidence="1">
    <location>
        <begin position="1"/>
        <end position="21"/>
    </location>
</feature>
<feature type="transmembrane region" description="Helical" evidence="1">
    <location>
        <begin position="33"/>
        <end position="53"/>
    </location>
</feature>
<feature type="transmembrane region" description="Helical" evidence="1">
    <location>
        <begin position="61"/>
        <end position="81"/>
    </location>
</feature>
<feature type="transmembrane region" description="Helical" evidence="1">
    <location>
        <begin position="94"/>
        <end position="114"/>
    </location>
</feature>
<feature type="binding site" evidence="1">
    <location>
        <position position="71"/>
    </location>
    <ligand>
        <name>Na(+)</name>
        <dbReference type="ChEBI" id="CHEBI:29101"/>
        <note>structural</note>
    </ligand>
</feature>
<feature type="binding site" evidence="1">
    <location>
        <position position="74"/>
    </location>
    <ligand>
        <name>Na(+)</name>
        <dbReference type="ChEBI" id="CHEBI:29101"/>
        <note>structural</note>
    </ligand>
</feature>
<name>FLUC2_STAES</name>
<comment type="function">
    <text evidence="1">Fluoride-specific ion channel. Important for reducing fluoride concentration in the cell, thus reducing its toxicity.</text>
</comment>
<comment type="catalytic activity">
    <reaction evidence="1">
        <text>fluoride(in) = fluoride(out)</text>
        <dbReference type="Rhea" id="RHEA:76159"/>
        <dbReference type="ChEBI" id="CHEBI:17051"/>
    </reaction>
    <physiologicalReaction direction="left-to-right" evidence="1">
        <dbReference type="Rhea" id="RHEA:76160"/>
    </physiologicalReaction>
</comment>
<comment type="activity regulation">
    <text evidence="1">Na(+) is not transported, but it plays an essential structural role and its presence is essential for fluoride channel function.</text>
</comment>
<comment type="subcellular location">
    <subcellularLocation>
        <location evidence="1">Cell membrane</location>
        <topology evidence="1">Multi-pass membrane protein</topology>
    </subcellularLocation>
</comment>
<comment type="similarity">
    <text evidence="1">Belongs to the fluoride channel Fluc/FEX (TC 1.A.43) family.</text>
</comment>
<gene>
    <name evidence="1" type="primary">fluC2</name>
    <name evidence="1" type="synonym">crcB2</name>
    <name type="ordered locus">SE_1452</name>
</gene>
<accession>Q8CS28</accession>
<proteinExistence type="inferred from homology"/>
<dbReference type="EMBL" id="AE015929">
    <property type="protein sequence ID" value="AAO05051.1"/>
    <property type="molecule type" value="Genomic_DNA"/>
</dbReference>
<dbReference type="RefSeq" id="NP_765007.1">
    <property type="nucleotide sequence ID" value="NC_004461.1"/>
</dbReference>
<dbReference type="RefSeq" id="WP_001830729.1">
    <property type="nucleotide sequence ID" value="NZ_WBME01000105.1"/>
</dbReference>
<dbReference type="SMR" id="Q8CS28"/>
<dbReference type="KEGG" id="sep:SE_1452"/>
<dbReference type="PATRIC" id="fig|176280.10.peg.1417"/>
<dbReference type="eggNOG" id="COG0239">
    <property type="taxonomic scope" value="Bacteria"/>
</dbReference>
<dbReference type="HOGENOM" id="CLU_114342_2_3_9"/>
<dbReference type="OrthoDB" id="9815830at2"/>
<dbReference type="Proteomes" id="UP000001411">
    <property type="component" value="Chromosome"/>
</dbReference>
<dbReference type="GO" id="GO:0005886">
    <property type="term" value="C:plasma membrane"/>
    <property type="evidence" value="ECO:0007669"/>
    <property type="project" value="UniProtKB-SubCell"/>
</dbReference>
<dbReference type="GO" id="GO:0062054">
    <property type="term" value="F:fluoride channel activity"/>
    <property type="evidence" value="ECO:0007669"/>
    <property type="project" value="UniProtKB-UniRule"/>
</dbReference>
<dbReference type="GO" id="GO:0046872">
    <property type="term" value="F:metal ion binding"/>
    <property type="evidence" value="ECO:0007669"/>
    <property type="project" value="UniProtKB-KW"/>
</dbReference>
<dbReference type="GO" id="GO:0140114">
    <property type="term" value="P:cellular detoxification of fluoride"/>
    <property type="evidence" value="ECO:0007669"/>
    <property type="project" value="UniProtKB-UniRule"/>
</dbReference>
<dbReference type="HAMAP" id="MF_00454">
    <property type="entry name" value="FluC"/>
    <property type="match status" value="1"/>
</dbReference>
<dbReference type="InterPro" id="IPR003691">
    <property type="entry name" value="FluC"/>
</dbReference>
<dbReference type="PANTHER" id="PTHR28259">
    <property type="entry name" value="FLUORIDE EXPORT PROTEIN 1-RELATED"/>
    <property type="match status" value="1"/>
</dbReference>
<dbReference type="PANTHER" id="PTHR28259:SF16">
    <property type="entry name" value="FLUORIDE-SPECIFIC ION CHANNEL FLUC 2"/>
    <property type="match status" value="1"/>
</dbReference>
<dbReference type="Pfam" id="PF02537">
    <property type="entry name" value="CRCB"/>
    <property type="match status" value="1"/>
</dbReference>
<protein>
    <recommendedName>
        <fullName evidence="1">Fluoride-specific ion channel FluC 2</fullName>
    </recommendedName>
</protein>